<dbReference type="EMBL" id="CP001396">
    <property type="protein sequence ID" value="ACR62291.1"/>
    <property type="molecule type" value="Genomic_DNA"/>
</dbReference>
<dbReference type="RefSeq" id="WP_000847791.1">
    <property type="nucleotide sequence ID" value="NC_012759.1"/>
</dbReference>
<dbReference type="KEGG" id="ebw:BWG_0816"/>
<dbReference type="HOGENOM" id="CLU_073782_2_0_6"/>
<dbReference type="HAMAP" id="MF_00789">
    <property type="entry name" value="UPF0319"/>
    <property type="match status" value="1"/>
</dbReference>
<dbReference type="InterPro" id="IPR018635">
    <property type="entry name" value="UPF0319"/>
</dbReference>
<dbReference type="NCBIfam" id="NF047712">
    <property type="entry name" value="CrliSynInhib"/>
    <property type="match status" value="1"/>
</dbReference>
<dbReference type="NCBIfam" id="NF002967">
    <property type="entry name" value="PRK03641.1"/>
    <property type="match status" value="1"/>
</dbReference>
<dbReference type="PANTHER" id="PTHR38108">
    <property type="entry name" value="UPF0319 PROTEIN YCCT"/>
    <property type="match status" value="1"/>
</dbReference>
<dbReference type="PANTHER" id="PTHR38108:SF1">
    <property type="entry name" value="UPF0319 PROTEIN YCCT"/>
    <property type="match status" value="1"/>
</dbReference>
<dbReference type="Pfam" id="PF09829">
    <property type="entry name" value="DUF2057"/>
    <property type="match status" value="1"/>
</dbReference>
<feature type="signal peptide" evidence="1">
    <location>
        <begin position="1"/>
        <end position="20"/>
    </location>
</feature>
<feature type="chain" id="PRO_1000212955" description="UPF0319 protein YccT">
    <location>
        <begin position="21"/>
        <end position="220"/>
    </location>
</feature>
<gene>
    <name evidence="1" type="primary">yccT</name>
    <name type="ordered locus">BWG_0816</name>
</gene>
<name>YCCT_ECOBW</name>
<organism>
    <name type="scientific">Escherichia coli (strain K12 / MC4100 / BW2952)</name>
    <dbReference type="NCBI Taxonomy" id="595496"/>
    <lineage>
        <taxon>Bacteria</taxon>
        <taxon>Pseudomonadati</taxon>
        <taxon>Pseudomonadota</taxon>
        <taxon>Gammaproteobacteria</taxon>
        <taxon>Enterobacterales</taxon>
        <taxon>Enterobacteriaceae</taxon>
        <taxon>Escherichia</taxon>
    </lineage>
</organism>
<comment type="similarity">
    <text evidence="1">Belongs to the UPF0319 family.</text>
</comment>
<keyword id="KW-0732">Signal</keyword>
<reference key="1">
    <citation type="journal article" date="2009" name="J. Bacteriol.">
        <title>Genomic sequencing reveals regulatory mutations and recombinational events in the widely used MC4100 lineage of Escherichia coli K-12.</title>
        <authorList>
            <person name="Ferenci T."/>
            <person name="Zhou Z."/>
            <person name="Betteridge T."/>
            <person name="Ren Y."/>
            <person name="Liu Y."/>
            <person name="Feng L."/>
            <person name="Reeves P.R."/>
            <person name="Wang L."/>
        </authorList>
    </citation>
    <scope>NUCLEOTIDE SEQUENCE [LARGE SCALE GENOMIC DNA]</scope>
    <source>
        <strain>K12 / MC4100 / BW2952</strain>
    </source>
</reference>
<protein>
    <recommendedName>
        <fullName evidence="1">UPF0319 protein YccT</fullName>
    </recommendedName>
</protein>
<accession>C4ZQ90</accession>
<evidence type="ECO:0000255" key="1">
    <source>
        <dbReference type="HAMAP-Rule" id="MF_00789"/>
    </source>
</evidence>
<proteinExistence type="inferred from homology"/>
<sequence length="220" mass="24594">MKTGIVTTLIALCLPVSVFATTLRLSTDVDLLVLDGKKVSSSLLRGADSIELDNGPHQLVFRVEKTIHLSNSEERLYISPPLVVSFNTQLINQVNFRLPRLENEREANHFDAAPRLELLDGDATPIPVKLDILAITSTAKTIDYEVEVERYNKSAKRASLPQFATMMADDSTLLSGVSELDAIPPQSQVLTEQRLKYWFKLADPQTRNTFLQWAEKQPSS</sequence>